<accession>P34334</accession>
<comment type="similarity">
    <text evidence="2">Belongs to the eukaryotic ribosomal protein eL21 family.</text>
</comment>
<dbReference type="EMBL" id="FO080531">
    <property type="protein sequence ID" value="CCD64440.1"/>
    <property type="molecule type" value="Genomic_DNA"/>
</dbReference>
<dbReference type="PIR" id="S44757">
    <property type="entry name" value="S44757"/>
</dbReference>
<dbReference type="RefSeq" id="NP_498774.1">
    <property type="nucleotide sequence ID" value="NM_066373.9"/>
</dbReference>
<dbReference type="PDB" id="9BH5">
    <property type="method" value="EM"/>
    <property type="resolution" value="2.63 A"/>
    <property type="chains" value="CT=1-161"/>
</dbReference>
<dbReference type="PDB" id="9CAI">
    <property type="method" value="EM"/>
    <property type="resolution" value="2.59 A"/>
    <property type="chains" value="CT=1-161"/>
</dbReference>
<dbReference type="PDBsum" id="9BH5"/>
<dbReference type="PDBsum" id="9CAI"/>
<dbReference type="EMDB" id="EMD-44533"/>
<dbReference type="EMDB" id="EMD-45392"/>
<dbReference type="SMR" id="P34334"/>
<dbReference type="BioGRID" id="41352">
    <property type="interactions" value="100"/>
</dbReference>
<dbReference type="DIP" id="DIP-24597N"/>
<dbReference type="FunCoup" id="P34334">
    <property type="interactions" value="1872"/>
</dbReference>
<dbReference type="IntAct" id="P34334">
    <property type="interactions" value="2"/>
</dbReference>
<dbReference type="STRING" id="6239.C14B9.7.1"/>
<dbReference type="PaxDb" id="6239-C14B9.7.1"/>
<dbReference type="PeptideAtlas" id="P34334"/>
<dbReference type="EnsemblMetazoa" id="C14B9.7.1">
    <property type="protein sequence ID" value="C14B9.7.1"/>
    <property type="gene ID" value="WBGene00004433"/>
</dbReference>
<dbReference type="GeneID" id="176146"/>
<dbReference type="KEGG" id="cel:CELE_C14B9.7"/>
<dbReference type="UCSC" id="C14B9.7.2">
    <property type="organism name" value="c. elegans"/>
</dbReference>
<dbReference type="AGR" id="WB:WBGene00004433"/>
<dbReference type="CTD" id="176146"/>
<dbReference type="WormBase" id="C14B9.7">
    <property type="protein sequence ID" value="CE00078"/>
    <property type="gene ID" value="WBGene00004433"/>
    <property type="gene designation" value="rpl-21"/>
</dbReference>
<dbReference type="eggNOG" id="KOG1732">
    <property type="taxonomic scope" value="Eukaryota"/>
</dbReference>
<dbReference type="GeneTree" id="ENSGT00950000182922"/>
<dbReference type="HOGENOM" id="CLU_103610_0_1_1"/>
<dbReference type="InParanoid" id="P34334"/>
<dbReference type="OMA" id="INYGDYV"/>
<dbReference type="OrthoDB" id="1539250at2759"/>
<dbReference type="PhylomeDB" id="P34334"/>
<dbReference type="Reactome" id="R-CEL-156827">
    <property type="pathway name" value="L13a-mediated translational silencing of Ceruloplasmin expression"/>
</dbReference>
<dbReference type="Reactome" id="R-CEL-1799339">
    <property type="pathway name" value="SRP-dependent cotranslational protein targeting to membrane"/>
</dbReference>
<dbReference type="Reactome" id="R-CEL-72689">
    <property type="pathway name" value="Formation of a pool of free 40S subunits"/>
</dbReference>
<dbReference type="Reactome" id="R-CEL-72706">
    <property type="pathway name" value="GTP hydrolysis and joining of the 60S ribosomal subunit"/>
</dbReference>
<dbReference type="Reactome" id="R-CEL-975956">
    <property type="pathway name" value="Nonsense Mediated Decay (NMD) independent of the Exon Junction Complex (EJC)"/>
</dbReference>
<dbReference type="Reactome" id="R-CEL-975957">
    <property type="pathway name" value="Nonsense Mediated Decay (NMD) enhanced by the Exon Junction Complex (EJC)"/>
</dbReference>
<dbReference type="PRO" id="PR:P34334"/>
<dbReference type="Proteomes" id="UP000001940">
    <property type="component" value="Chromosome III"/>
</dbReference>
<dbReference type="Bgee" id="WBGene00004433">
    <property type="expression patterns" value="Expressed in germ line (C elegans) and 4 other cell types or tissues"/>
</dbReference>
<dbReference type="GO" id="GO:0022625">
    <property type="term" value="C:cytosolic large ribosomal subunit"/>
    <property type="evidence" value="ECO:0000318"/>
    <property type="project" value="GO_Central"/>
</dbReference>
<dbReference type="GO" id="GO:0003735">
    <property type="term" value="F:structural constituent of ribosome"/>
    <property type="evidence" value="ECO:0000318"/>
    <property type="project" value="GO_Central"/>
</dbReference>
<dbReference type="GO" id="GO:0006412">
    <property type="term" value="P:translation"/>
    <property type="evidence" value="ECO:0007669"/>
    <property type="project" value="InterPro"/>
</dbReference>
<dbReference type="FunFam" id="2.30.30.70:FF:000001">
    <property type="entry name" value="60S ribosomal protein L21"/>
    <property type="match status" value="1"/>
</dbReference>
<dbReference type="FunFam" id="6.10.250.3260:FF:000001">
    <property type="entry name" value="60S ribosomal protein L21"/>
    <property type="match status" value="1"/>
</dbReference>
<dbReference type="Gene3D" id="6.10.250.3260">
    <property type="match status" value="1"/>
</dbReference>
<dbReference type="Gene3D" id="2.30.30.70">
    <property type="entry name" value="Ribosomal protein L21"/>
    <property type="match status" value="1"/>
</dbReference>
<dbReference type="InterPro" id="IPR001147">
    <property type="entry name" value="Ribosomal_eL21"/>
</dbReference>
<dbReference type="InterPro" id="IPR018259">
    <property type="entry name" value="Ribosomal_eL21_CS"/>
</dbReference>
<dbReference type="InterPro" id="IPR036948">
    <property type="entry name" value="Ribosomal_eL21_sf"/>
</dbReference>
<dbReference type="InterPro" id="IPR008991">
    <property type="entry name" value="Translation_prot_SH3-like_sf"/>
</dbReference>
<dbReference type="PANTHER" id="PTHR20981">
    <property type="entry name" value="60S RIBOSOMAL PROTEIN L21"/>
    <property type="match status" value="1"/>
</dbReference>
<dbReference type="Pfam" id="PF01157">
    <property type="entry name" value="Ribosomal_L21e"/>
    <property type="match status" value="1"/>
</dbReference>
<dbReference type="SUPFAM" id="SSF50104">
    <property type="entry name" value="Translation proteins SH3-like domain"/>
    <property type="match status" value="1"/>
</dbReference>
<dbReference type="PROSITE" id="PS01171">
    <property type="entry name" value="RIBOSOMAL_L21E"/>
    <property type="match status" value="1"/>
</dbReference>
<evidence type="ECO:0000250" key="1"/>
<evidence type="ECO:0000305" key="2"/>
<keyword id="KW-0002">3D-structure</keyword>
<keyword id="KW-1185">Reference proteome</keyword>
<keyword id="KW-0687">Ribonucleoprotein</keyword>
<keyword id="KW-0689">Ribosomal protein</keyword>
<protein>
    <recommendedName>
        <fullName evidence="2">Large ribosomal subunit protein eL21</fullName>
    </recommendedName>
    <alternativeName>
        <fullName>60S ribosomal protein L21</fullName>
    </alternativeName>
</protein>
<reference key="1">
    <citation type="journal article" date="1994" name="Nature">
        <title>2.2 Mb of contiguous nucleotide sequence from chromosome III of C. elegans.</title>
        <authorList>
            <person name="Wilson R."/>
            <person name="Ainscough R."/>
            <person name="Anderson K."/>
            <person name="Baynes C."/>
            <person name="Berks M."/>
            <person name="Bonfield J."/>
            <person name="Burton J."/>
            <person name="Connell M."/>
            <person name="Copsey T."/>
            <person name="Cooper J."/>
            <person name="Coulson A."/>
            <person name="Craxton M."/>
            <person name="Dear S."/>
            <person name="Du Z."/>
            <person name="Durbin R."/>
            <person name="Favello A."/>
            <person name="Fraser A."/>
            <person name="Fulton L."/>
            <person name="Gardner A."/>
            <person name="Green P."/>
            <person name="Hawkins T."/>
            <person name="Hillier L."/>
            <person name="Jier M."/>
            <person name="Johnston L."/>
            <person name="Jones M."/>
            <person name="Kershaw J."/>
            <person name="Kirsten J."/>
            <person name="Laisster N."/>
            <person name="Latreille P."/>
            <person name="Lightning J."/>
            <person name="Lloyd C."/>
            <person name="Mortimore B."/>
            <person name="O'Callaghan M."/>
            <person name="Parsons J."/>
            <person name="Percy C."/>
            <person name="Rifken L."/>
            <person name="Roopra A."/>
            <person name="Saunders D."/>
            <person name="Shownkeen R."/>
            <person name="Sims M."/>
            <person name="Smaldon N."/>
            <person name="Smith A."/>
            <person name="Smith M."/>
            <person name="Sonnhammer E."/>
            <person name="Staden R."/>
            <person name="Sulston J."/>
            <person name="Thierry-Mieg J."/>
            <person name="Thomas K."/>
            <person name="Vaudin M."/>
            <person name="Vaughan K."/>
            <person name="Waterston R."/>
            <person name="Watson A."/>
            <person name="Weinstock L."/>
            <person name="Wilkinson-Sproat J."/>
            <person name="Wohldman P."/>
        </authorList>
    </citation>
    <scope>NUCLEOTIDE SEQUENCE [LARGE SCALE GENOMIC DNA]</scope>
    <source>
        <strain>Bristol N2</strain>
    </source>
</reference>
<reference key="2">
    <citation type="journal article" date="1998" name="Science">
        <title>Genome sequence of the nematode C. elegans: a platform for investigating biology.</title>
        <authorList>
            <consortium name="The C. elegans sequencing consortium"/>
        </authorList>
    </citation>
    <scope>NUCLEOTIDE SEQUENCE [LARGE SCALE GENOMIC DNA]</scope>
    <source>
        <strain>Bristol N2</strain>
    </source>
</reference>
<name>RL21_CAEEL</name>
<proteinExistence type="evidence at protein level"/>
<organism>
    <name type="scientific">Caenorhabditis elegans</name>
    <dbReference type="NCBI Taxonomy" id="6239"/>
    <lineage>
        <taxon>Eukaryota</taxon>
        <taxon>Metazoa</taxon>
        <taxon>Ecdysozoa</taxon>
        <taxon>Nematoda</taxon>
        <taxon>Chromadorea</taxon>
        <taxon>Rhabditida</taxon>
        <taxon>Rhabditina</taxon>
        <taxon>Rhabditomorpha</taxon>
        <taxon>Rhabditoidea</taxon>
        <taxon>Rhabditidae</taxon>
        <taxon>Peloderinae</taxon>
        <taxon>Caenorhabditis</taxon>
    </lineage>
</organism>
<feature type="initiator methionine" description="Removed" evidence="1">
    <location>
        <position position="1"/>
    </location>
</feature>
<feature type="chain" id="PRO_0000149674" description="Large ribosomal subunit protein eL21">
    <location>
        <begin position="2"/>
        <end position="161"/>
    </location>
</feature>
<gene>
    <name type="primary">rpl-21</name>
    <name type="ORF">C14B9.7</name>
</gene>
<sequence length="161" mass="18310">MTNSKGLRRGTRYMFARDFRKHGVEHLSTYYTQYKRGDLVDIKTNGAFQKGMPFKAYHGRTGRIFNVTRGAVGIIVNKRVRGNILPKRINIRIEHIKPSKCRTDFLNRVKSNDEKRKAAKSAGQPVPALKRLPVAPRGAHTVTTQNNEPELLAPLRFEIVA</sequence>